<sequence length="520" mass="56257">MAKIGRALISVSEKTGVVEFSRALAGYGVEILSTGGTAKLLREAGIAVKDVSEFTGFPEMLDGRVKTLHPKVHGGILGMRENPAHVAKMQEHGIEPIDMVVVNLYPFEATVAKEDCTMEDAIENIDIGGPTMLRSAAKNNRDVTVVVDHADYAVVLDEMKNSGGSVSRETNFRLAVKVYQHTAAYDGAISNWLGARTGEGVAPFPDTLTMQYKLAQGMRYGENPHQSGAFYVEKGSRESSISTARQIQGKELSYNNIGDTDAALECVKQFTEPACVIVKHANPCGVALGANIMEAYDKAYKTDPESAFGGIIAFNRELDESTARAIVERQFVEVIIAPKVTEAASEIVAAKKNVRLMECGFWPENPAPRFDYKRVNGGMLVQDADLELFTELKVVTKRAPTDKEMEDLLFTWRVAKFVKSNAIVYGRDNSTVGVGAGQMSRVNSARIAAIKAEHAGIPVQGAVMASDAFFPFRDGLDNAASVGVTAVIQPGGSMRDAEVIAAADEHGIAMVFTSMRHFRH</sequence>
<feature type="chain" id="PRO_1000096065" description="Bifunctional purine biosynthesis protein PurH">
    <location>
        <begin position="1"/>
        <end position="520"/>
    </location>
</feature>
<feature type="domain" description="MGS-like" evidence="2">
    <location>
        <begin position="1"/>
        <end position="147"/>
    </location>
</feature>
<organism>
    <name type="scientific">Citrifermentans bemidjiense (strain ATCC BAA-1014 / DSM 16622 / JCM 12645 / Bem)</name>
    <name type="common">Geobacter bemidjiensis</name>
    <dbReference type="NCBI Taxonomy" id="404380"/>
    <lineage>
        <taxon>Bacteria</taxon>
        <taxon>Pseudomonadati</taxon>
        <taxon>Thermodesulfobacteriota</taxon>
        <taxon>Desulfuromonadia</taxon>
        <taxon>Geobacterales</taxon>
        <taxon>Geobacteraceae</taxon>
        <taxon>Citrifermentans</taxon>
    </lineage>
</organism>
<gene>
    <name evidence="1" type="primary">purH</name>
    <name type="ordered locus">Gbem_3458</name>
</gene>
<comment type="catalytic activity">
    <reaction evidence="1">
        <text>(6R)-10-formyltetrahydrofolate + 5-amino-1-(5-phospho-beta-D-ribosyl)imidazole-4-carboxamide = 5-formamido-1-(5-phospho-D-ribosyl)imidazole-4-carboxamide + (6S)-5,6,7,8-tetrahydrofolate</text>
        <dbReference type="Rhea" id="RHEA:22192"/>
        <dbReference type="ChEBI" id="CHEBI:57453"/>
        <dbReference type="ChEBI" id="CHEBI:58467"/>
        <dbReference type="ChEBI" id="CHEBI:58475"/>
        <dbReference type="ChEBI" id="CHEBI:195366"/>
        <dbReference type="EC" id="2.1.2.3"/>
    </reaction>
</comment>
<comment type="catalytic activity">
    <reaction evidence="1">
        <text>IMP + H2O = 5-formamido-1-(5-phospho-D-ribosyl)imidazole-4-carboxamide</text>
        <dbReference type="Rhea" id="RHEA:18445"/>
        <dbReference type="ChEBI" id="CHEBI:15377"/>
        <dbReference type="ChEBI" id="CHEBI:58053"/>
        <dbReference type="ChEBI" id="CHEBI:58467"/>
        <dbReference type="EC" id="3.5.4.10"/>
    </reaction>
</comment>
<comment type="pathway">
    <text evidence="1">Purine metabolism; IMP biosynthesis via de novo pathway; 5-formamido-1-(5-phospho-D-ribosyl)imidazole-4-carboxamide from 5-amino-1-(5-phospho-D-ribosyl)imidazole-4-carboxamide (10-formyl THF route): step 1/1.</text>
</comment>
<comment type="pathway">
    <text evidence="1">Purine metabolism; IMP biosynthesis via de novo pathway; IMP from 5-formamido-1-(5-phospho-D-ribosyl)imidazole-4-carboxamide: step 1/1.</text>
</comment>
<comment type="domain">
    <text evidence="1">The IMP cyclohydrolase activity resides in the N-terminal region.</text>
</comment>
<comment type="similarity">
    <text evidence="1">Belongs to the PurH family.</text>
</comment>
<keyword id="KW-0378">Hydrolase</keyword>
<keyword id="KW-0511">Multifunctional enzyme</keyword>
<keyword id="KW-0658">Purine biosynthesis</keyword>
<keyword id="KW-1185">Reference proteome</keyword>
<keyword id="KW-0808">Transferase</keyword>
<accession>B5EBF9</accession>
<reference key="1">
    <citation type="submission" date="2008-07" db="EMBL/GenBank/DDBJ databases">
        <title>Complete sequence of Geobacter bemidjiensis BEM.</title>
        <authorList>
            <consortium name="US DOE Joint Genome Institute"/>
            <person name="Lucas S."/>
            <person name="Copeland A."/>
            <person name="Lapidus A."/>
            <person name="Glavina del Rio T."/>
            <person name="Dalin E."/>
            <person name="Tice H."/>
            <person name="Bruce D."/>
            <person name="Goodwin L."/>
            <person name="Pitluck S."/>
            <person name="Kiss H."/>
            <person name="Brettin T."/>
            <person name="Detter J.C."/>
            <person name="Han C."/>
            <person name="Kuske C.R."/>
            <person name="Schmutz J."/>
            <person name="Larimer F."/>
            <person name="Land M."/>
            <person name="Hauser L."/>
            <person name="Kyrpides N."/>
            <person name="Lykidis A."/>
            <person name="Lovley D."/>
            <person name="Richardson P."/>
        </authorList>
    </citation>
    <scope>NUCLEOTIDE SEQUENCE [LARGE SCALE GENOMIC DNA]</scope>
    <source>
        <strain>ATCC BAA-1014 / DSM 16622 / JCM 12645 / Bem</strain>
    </source>
</reference>
<proteinExistence type="inferred from homology"/>
<name>PUR9_CITBB</name>
<evidence type="ECO:0000255" key="1">
    <source>
        <dbReference type="HAMAP-Rule" id="MF_00139"/>
    </source>
</evidence>
<evidence type="ECO:0000255" key="2">
    <source>
        <dbReference type="PROSITE-ProRule" id="PRU01202"/>
    </source>
</evidence>
<dbReference type="EC" id="2.1.2.3" evidence="1"/>
<dbReference type="EC" id="3.5.4.10" evidence="1"/>
<dbReference type="EMBL" id="CP001124">
    <property type="protein sequence ID" value="ACH40451.1"/>
    <property type="molecule type" value="Genomic_DNA"/>
</dbReference>
<dbReference type="RefSeq" id="WP_012531884.1">
    <property type="nucleotide sequence ID" value="NC_011146.1"/>
</dbReference>
<dbReference type="SMR" id="B5EBF9"/>
<dbReference type="STRING" id="404380.Gbem_3458"/>
<dbReference type="KEGG" id="gbm:Gbem_3458"/>
<dbReference type="eggNOG" id="COG0138">
    <property type="taxonomic scope" value="Bacteria"/>
</dbReference>
<dbReference type="HOGENOM" id="CLU_016316_5_2_7"/>
<dbReference type="OrthoDB" id="9802065at2"/>
<dbReference type="UniPathway" id="UPA00074">
    <property type="reaction ID" value="UER00133"/>
</dbReference>
<dbReference type="UniPathway" id="UPA00074">
    <property type="reaction ID" value="UER00135"/>
</dbReference>
<dbReference type="Proteomes" id="UP000008825">
    <property type="component" value="Chromosome"/>
</dbReference>
<dbReference type="GO" id="GO:0005829">
    <property type="term" value="C:cytosol"/>
    <property type="evidence" value="ECO:0007669"/>
    <property type="project" value="TreeGrafter"/>
</dbReference>
<dbReference type="GO" id="GO:0003937">
    <property type="term" value="F:IMP cyclohydrolase activity"/>
    <property type="evidence" value="ECO:0007669"/>
    <property type="project" value="UniProtKB-UniRule"/>
</dbReference>
<dbReference type="GO" id="GO:0004643">
    <property type="term" value="F:phosphoribosylaminoimidazolecarboxamide formyltransferase activity"/>
    <property type="evidence" value="ECO:0007669"/>
    <property type="project" value="UniProtKB-UniRule"/>
</dbReference>
<dbReference type="GO" id="GO:0006189">
    <property type="term" value="P:'de novo' IMP biosynthetic process"/>
    <property type="evidence" value="ECO:0007669"/>
    <property type="project" value="UniProtKB-UniRule"/>
</dbReference>
<dbReference type="CDD" id="cd01421">
    <property type="entry name" value="IMPCH"/>
    <property type="match status" value="1"/>
</dbReference>
<dbReference type="FunFam" id="3.40.140.20:FF:000001">
    <property type="entry name" value="Bifunctional purine biosynthesis protein PurH"/>
    <property type="match status" value="1"/>
</dbReference>
<dbReference type="FunFam" id="3.40.140.20:FF:000002">
    <property type="entry name" value="Bifunctional purine biosynthesis protein PurH"/>
    <property type="match status" value="1"/>
</dbReference>
<dbReference type="FunFam" id="3.40.50.1380:FF:000001">
    <property type="entry name" value="Bifunctional purine biosynthesis protein PurH"/>
    <property type="match status" value="1"/>
</dbReference>
<dbReference type="Gene3D" id="3.40.140.20">
    <property type="match status" value="2"/>
</dbReference>
<dbReference type="Gene3D" id="3.40.50.1380">
    <property type="entry name" value="Methylglyoxal synthase-like domain"/>
    <property type="match status" value="1"/>
</dbReference>
<dbReference type="HAMAP" id="MF_00139">
    <property type="entry name" value="PurH"/>
    <property type="match status" value="1"/>
</dbReference>
<dbReference type="InterPro" id="IPR024051">
    <property type="entry name" value="AICAR_Tfase_dup_dom_sf"/>
</dbReference>
<dbReference type="InterPro" id="IPR016193">
    <property type="entry name" value="Cytidine_deaminase-like"/>
</dbReference>
<dbReference type="InterPro" id="IPR011607">
    <property type="entry name" value="MGS-like_dom"/>
</dbReference>
<dbReference type="InterPro" id="IPR036914">
    <property type="entry name" value="MGS-like_dom_sf"/>
</dbReference>
<dbReference type="InterPro" id="IPR002695">
    <property type="entry name" value="PurH-like"/>
</dbReference>
<dbReference type="NCBIfam" id="NF002049">
    <property type="entry name" value="PRK00881.1"/>
    <property type="match status" value="1"/>
</dbReference>
<dbReference type="NCBIfam" id="TIGR00355">
    <property type="entry name" value="purH"/>
    <property type="match status" value="1"/>
</dbReference>
<dbReference type="PANTHER" id="PTHR11692:SF0">
    <property type="entry name" value="BIFUNCTIONAL PURINE BIOSYNTHESIS PROTEIN ATIC"/>
    <property type="match status" value="1"/>
</dbReference>
<dbReference type="PANTHER" id="PTHR11692">
    <property type="entry name" value="BIFUNCTIONAL PURINE BIOSYNTHESIS PROTEIN PURH"/>
    <property type="match status" value="1"/>
</dbReference>
<dbReference type="Pfam" id="PF01808">
    <property type="entry name" value="AICARFT_IMPCHas"/>
    <property type="match status" value="1"/>
</dbReference>
<dbReference type="Pfam" id="PF02142">
    <property type="entry name" value="MGS"/>
    <property type="match status" value="1"/>
</dbReference>
<dbReference type="PIRSF" id="PIRSF000414">
    <property type="entry name" value="AICARFT_IMPCHas"/>
    <property type="match status" value="1"/>
</dbReference>
<dbReference type="SMART" id="SM00798">
    <property type="entry name" value="AICARFT_IMPCHas"/>
    <property type="match status" value="1"/>
</dbReference>
<dbReference type="SMART" id="SM00851">
    <property type="entry name" value="MGS"/>
    <property type="match status" value="1"/>
</dbReference>
<dbReference type="SUPFAM" id="SSF53927">
    <property type="entry name" value="Cytidine deaminase-like"/>
    <property type="match status" value="1"/>
</dbReference>
<dbReference type="SUPFAM" id="SSF52335">
    <property type="entry name" value="Methylglyoxal synthase-like"/>
    <property type="match status" value="1"/>
</dbReference>
<dbReference type="PROSITE" id="PS51855">
    <property type="entry name" value="MGS"/>
    <property type="match status" value="1"/>
</dbReference>
<protein>
    <recommendedName>
        <fullName evidence="1">Bifunctional purine biosynthesis protein PurH</fullName>
    </recommendedName>
    <domain>
        <recommendedName>
            <fullName evidence="1">Phosphoribosylaminoimidazolecarboxamide formyltransferase</fullName>
            <ecNumber evidence="1">2.1.2.3</ecNumber>
        </recommendedName>
        <alternativeName>
            <fullName evidence="1">AICAR transformylase</fullName>
        </alternativeName>
    </domain>
    <domain>
        <recommendedName>
            <fullName evidence="1">IMP cyclohydrolase</fullName>
            <ecNumber evidence="1">3.5.4.10</ecNumber>
        </recommendedName>
        <alternativeName>
            <fullName evidence="1">ATIC</fullName>
        </alternativeName>
        <alternativeName>
            <fullName evidence="1">IMP synthase</fullName>
        </alternativeName>
        <alternativeName>
            <fullName evidence="1">Inosinicase</fullName>
        </alternativeName>
    </domain>
</protein>